<name>MEPA_YERPA</name>
<reference key="1">
    <citation type="journal article" date="2006" name="J. Bacteriol.">
        <title>Complete genome sequence of Yersinia pestis strains Antiqua and Nepal516: evidence of gene reduction in an emerging pathogen.</title>
        <authorList>
            <person name="Chain P.S.G."/>
            <person name="Hu P."/>
            <person name="Malfatti S.A."/>
            <person name="Radnedge L."/>
            <person name="Larimer F."/>
            <person name="Vergez L.M."/>
            <person name="Worsham P."/>
            <person name="Chu M.C."/>
            <person name="Andersen G.L."/>
        </authorList>
    </citation>
    <scope>NUCLEOTIDE SEQUENCE [LARGE SCALE GENOMIC DNA]</scope>
    <source>
        <strain>Antiqua</strain>
    </source>
</reference>
<comment type="function">
    <text evidence="1">Murein endopeptidase that cleaves the D-alanyl-meso-2,6-diamino-pimelyl amide bond that connects peptidoglycan strands. Likely plays a role in the removal of murein from the sacculus.</text>
</comment>
<comment type="cofactor">
    <cofactor evidence="1">
        <name>Zn(2+)</name>
        <dbReference type="ChEBI" id="CHEBI:29105"/>
    </cofactor>
    <text evidence="1">Binds 2 Zn(2+) ions per subunit. Zn(2+) ion 1 is bound in the active site. Zn(2+) ion 2 is bound at the dimer interface by residues from both subunits.</text>
</comment>
<comment type="subunit">
    <text evidence="1">Dimer.</text>
</comment>
<comment type="subcellular location">
    <subcellularLocation>
        <location evidence="1">Periplasm</location>
    </subcellularLocation>
</comment>
<comment type="similarity">
    <text evidence="1">Belongs to the peptidase M74 family.</text>
</comment>
<keyword id="KW-1015">Disulfide bond</keyword>
<keyword id="KW-0378">Hydrolase</keyword>
<keyword id="KW-0479">Metal-binding</keyword>
<keyword id="KW-0482">Metalloprotease</keyword>
<keyword id="KW-0574">Periplasm</keyword>
<keyword id="KW-0645">Protease</keyword>
<keyword id="KW-0732">Signal</keyword>
<keyword id="KW-0862">Zinc</keyword>
<evidence type="ECO:0000255" key="1">
    <source>
        <dbReference type="HAMAP-Rule" id="MF_01623"/>
    </source>
</evidence>
<evidence type="ECO:0000256" key="2">
    <source>
        <dbReference type="SAM" id="MobiDB-lite"/>
    </source>
</evidence>
<feature type="signal peptide" evidence="1">
    <location>
        <begin position="1"/>
        <end position="19"/>
    </location>
</feature>
<feature type="chain" id="PRO_0000292559" description="Penicillin-insensitive murein endopeptidase">
    <location>
        <begin position="20"/>
        <end position="275"/>
    </location>
</feature>
<feature type="region of interest" description="Disordered" evidence="2">
    <location>
        <begin position="227"/>
        <end position="262"/>
    </location>
</feature>
<feature type="compositionally biased region" description="Pro residues" evidence="2">
    <location>
        <begin position="244"/>
        <end position="262"/>
    </location>
</feature>
<feature type="binding site" evidence="1">
    <location>
        <position position="110"/>
    </location>
    <ligand>
        <name>Zn(2+)</name>
        <dbReference type="ChEBI" id="CHEBI:29105"/>
        <label>1</label>
    </ligand>
</feature>
<feature type="binding site" evidence="1">
    <location>
        <position position="113"/>
    </location>
    <ligand>
        <name>Zn(2+)</name>
        <dbReference type="ChEBI" id="CHEBI:29105"/>
        <label>1</label>
    </ligand>
</feature>
<feature type="binding site" evidence="1">
    <location>
        <position position="120"/>
    </location>
    <ligand>
        <name>Zn(2+)</name>
        <dbReference type="ChEBI" id="CHEBI:29105"/>
        <label>1</label>
    </ligand>
</feature>
<feature type="binding site" evidence="1">
    <location>
        <position position="147"/>
    </location>
    <ligand>
        <name>Zn(2+)</name>
        <dbReference type="ChEBI" id="CHEBI:29105"/>
        <label>2</label>
    </ligand>
</feature>
<feature type="binding site" evidence="1">
    <location>
        <position position="211"/>
    </location>
    <ligand>
        <name>Zn(2+)</name>
        <dbReference type="ChEBI" id="CHEBI:29105"/>
        <label>1</label>
    </ligand>
</feature>
<feature type="disulfide bond" evidence="1">
    <location>
        <begin position="44"/>
        <end position="264"/>
    </location>
</feature>
<feature type="disulfide bond" evidence="1">
    <location>
        <begin position="187"/>
        <end position="235"/>
    </location>
</feature>
<feature type="disulfide bond" evidence="1">
    <location>
        <begin position="216"/>
        <end position="223"/>
    </location>
</feature>
<proteinExistence type="inferred from homology"/>
<gene>
    <name evidence="1" type="primary">mepA</name>
    <name type="ordered locus">YPA_2091</name>
</gene>
<protein>
    <recommendedName>
        <fullName evidence="1">Penicillin-insensitive murein endopeptidase</fullName>
        <ecNumber evidence="1">3.4.24.-</ecNumber>
    </recommendedName>
    <alternativeName>
        <fullName evidence="1">D-alanyl-D-alanine-endopeptidase</fullName>
        <shortName evidence="1">DD-endopeptidase</shortName>
    </alternativeName>
</protein>
<dbReference type="EC" id="3.4.24.-" evidence="1"/>
<dbReference type="EMBL" id="CP000308">
    <property type="protein sequence ID" value="ABG14057.1"/>
    <property type="molecule type" value="Genomic_DNA"/>
</dbReference>
<dbReference type="RefSeq" id="WP_002225365.1">
    <property type="nucleotide sequence ID" value="NZ_CP009906.1"/>
</dbReference>
<dbReference type="SMR" id="Q1C665"/>
<dbReference type="MEROPS" id="M74.001"/>
<dbReference type="GeneID" id="49785366"/>
<dbReference type="KEGG" id="ypa:YPA_2091"/>
<dbReference type="Proteomes" id="UP000001971">
    <property type="component" value="Chromosome"/>
</dbReference>
<dbReference type="GO" id="GO:0030288">
    <property type="term" value="C:outer membrane-bounded periplasmic space"/>
    <property type="evidence" value="ECO:0007669"/>
    <property type="project" value="InterPro"/>
</dbReference>
<dbReference type="GO" id="GO:0046872">
    <property type="term" value="F:metal ion binding"/>
    <property type="evidence" value="ECO:0007669"/>
    <property type="project" value="UniProtKB-KW"/>
</dbReference>
<dbReference type="GO" id="GO:0004222">
    <property type="term" value="F:metalloendopeptidase activity"/>
    <property type="evidence" value="ECO:0007669"/>
    <property type="project" value="UniProtKB-UniRule"/>
</dbReference>
<dbReference type="GO" id="GO:0004252">
    <property type="term" value="F:serine-type endopeptidase activity"/>
    <property type="evidence" value="ECO:0007669"/>
    <property type="project" value="InterPro"/>
</dbReference>
<dbReference type="GO" id="GO:0000270">
    <property type="term" value="P:peptidoglycan metabolic process"/>
    <property type="evidence" value="ECO:0007669"/>
    <property type="project" value="UniProtKB-UniRule"/>
</dbReference>
<dbReference type="GO" id="GO:0006508">
    <property type="term" value="P:proteolysis"/>
    <property type="evidence" value="ECO:0007669"/>
    <property type="project" value="UniProtKB-KW"/>
</dbReference>
<dbReference type="Gene3D" id="3.30.1380.10">
    <property type="match status" value="1"/>
</dbReference>
<dbReference type="HAMAP" id="MF_01623">
    <property type="entry name" value="MepA"/>
    <property type="match status" value="1"/>
</dbReference>
<dbReference type="InterPro" id="IPR009045">
    <property type="entry name" value="Hedgehog_sig/DD-Pept_Zn-bd_sf"/>
</dbReference>
<dbReference type="InterPro" id="IPR005073">
    <property type="entry name" value="Peptidase_M74"/>
</dbReference>
<dbReference type="NCBIfam" id="NF006947">
    <property type="entry name" value="PRK09429.1"/>
    <property type="match status" value="1"/>
</dbReference>
<dbReference type="Pfam" id="PF03411">
    <property type="entry name" value="Peptidase_M74"/>
    <property type="match status" value="1"/>
</dbReference>
<dbReference type="PIRSF" id="PIRSF018455">
    <property type="entry name" value="MepA"/>
    <property type="match status" value="1"/>
</dbReference>
<dbReference type="SUPFAM" id="SSF55166">
    <property type="entry name" value="Hedgehog/DD-peptidase"/>
    <property type="match status" value="1"/>
</dbReference>
<organism>
    <name type="scientific">Yersinia pestis bv. Antiqua (strain Antiqua)</name>
    <dbReference type="NCBI Taxonomy" id="360102"/>
    <lineage>
        <taxon>Bacteria</taxon>
        <taxon>Pseudomonadati</taxon>
        <taxon>Pseudomonadota</taxon>
        <taxon>Gammaproteobacteria</taxon>
        <taxon>Enterobacterales</taxon>
        <taxon>Yersiniaceae</taxon>
        <taxon>Yersinia</taxon>
    </lineage>
</organism>
<sequence length="275" mass="30293">MKNWIVGMVALVTMVPVMAATPWQKITHPVAGSPQSIGGFANGCVIGAQPLPLESADYQVMRSDQRRYFGHPDLLNFIHRLSAQAHQQQLGTVLIGDMAMPAGGRFSSGHASHQSGLDVDIWLQLPKQRWSQQQLLKPQPIDLVAVDGKRVIPALWQPQIESLIKLAAKDNDVTRIFVNPAIKKQLCLDAGADRQWLHKVRPWFAHRAHMHVRLRCPANSLECVDQDTPPPGDGCGAELESWFQPPPPSAKPGKTLPPPLPPSCQALLDNHFATE</sequence>
<accession>Q1C665</accession>